<protein>
    <recommendedName>
        <fullName evidence="1">DNA-directed RNA polymerase subunit beta'</fullName>
        <shortName evidence="1">RNAP subunit beta'</shortName>
        <ecNumber evidence="1">2.7.7.6</ecNumber>
    </recommendedName>
    <alternativeName>
        <fullName evidence="1">RNA polymerase subunit beta'</fullName>
    </alternativeName>
    <alternativeName>
        <fullName evidence="1">Transcriptase subunit beta'</fullName>
    </alternativeName>
</protein>
<sequence>MKMLDLYGYTSIAQSFDKICISIASPESIRAMSYGEIKDISTTNYRTFKVEKGGLFCPKIFGPVNDDECLCGKYRKKRYRGVICEKCGVEVTSSKVRRERMGHIELVSPVAHVWFLKSLPSRIGALLDMPLKLIESILYSGDFVVIDPIATPLSKGEVISESAYNQAKDNYGEDSFIALTGAEAIRELLVRLDLHAINANLRSELESTTSEMKRKKIVKRLRIVENFINSGNKPEWMILTVIPILPPDLRPLVSLENGRPAVSDLNHHYRTIINRNNRLGKLLKLNPPAIMIRNEKRMLQEAVDALFDSTRRSYVSNKAGSVGYKKSLSDMLKGKQGRFRQNLLGKRVDYSGRSVIVVGPNLKLHQCGLPKKMALELFKPFICSKLKMYGIVPTVKLANKMIQNEKPEVWDILDEVIHEHPILLNRAPTLHRLGIQAFDPVLIEGKAIQLHPLVCSAFNADFDGDQMAVHIPLSLEAQLEARILMMSTNNILSPSNGKPIIVPSKDIILGIYYLTLQDYVEPEEILFFGDFSHVEYALHNKDIHICSKIKYKMNYCTDSSDGNGPTYYSKIVETTPGRLMLWQIFPEHKNLTFDLVNQVLTVKEITAIVDLVYRSCGQSETVEFSDKLMSLGFRYASQSGISFGRMDMIIPDTKTMHVDNASEKIKEFAVQYQDGLITKSERYNKVIDEWSKCTDLIAKDMMKAISVYDEESKLNSIYMMAHSGARGSASQMKQLAGMRGLMAKPSGEIIETPIISNFREGLNVFEYFNSTHGARKGLADTALKTANSGYLTRRLVDVAQDCIVVEYDCKTHNGFAMRSVIDGGTVVETLDNIILGRVAAVDIYNPITKELLVNAGELIDEAKVEKIRIAGLDAVKVRSPLTCEAKKGICALCYGRDLAIGDVVSIGEAVGVIAAQSVGEPGTQLTMRTFHVGGTAMRGVETSNLIAMLDAKVKLVNSNVVEDKYGNKIVMSRSCDVVLLDSVGNEKMRHSVPYGARLYVNDGQLVKITEKIADWDPYTMPIITEKTGIIKYMDLIDGVSINEVLDESTGISNRVVVDWKLHLQGANLRPRLVLVNDNGDIITLSSGLEANYFIPIGAVLSVQDGQKVHAGDVITRIPRESIKTRDITGGLPRVIELFEARRPKEHAIVSDIDGYVEFGKDYYRSKRRIFIKPVDDKLSPVEYLVPKGKHTIVNEGDFVHKGDLLMDGDPDPHDILRVLGVEALANYMIAEIQQVYRLQGVRIDNKHIEVILRQMLQKVEIFEPGDTMYLVGENVDVEEVLKTNSNMEKIGKSPAKYIPILQGITRASLDTNSFVSAASFQETTKVLTEAAFSGKEDSLYGLKENVIVGRLIPAGTGFLMNKIKKLSLLNKDDYSMYYNSEYQDLASIEAGHACSVSPSQGVSDTSGAVDY</sequence>
<dbReference type="EC" id="2.7.7.6" evidence="1"/>
<dbReference type="EMBL" id="CR767821">
    <property type="protein sequence ID" value="CAH57889.1"/>
    <property type="molecule type" value="Genomic_DNA"/>
</dbReference>
<dbReference type="EMBL" id="CR925678">
    <property type="protein sequence ID" value="CAI26666.1"/>
    <property type="molecule type" value="Genomic_DNA"/>
</dbReference>
<dbReference type="RefSeq" id="WP_011154857.1">
    <property type="nucleotide sequence ID" value="NC_005295.2"/>
</dbReference>
<dbReference type="SMR" id="Q5HC04"/>
<dbReference type="GeneID" id="33057935"/>
<dbReference type="KEGG" id="eru:Erum1730"/>
<dbReference type="KEGG" id="erw:ERWE_CDS_01720"/>
<dbReference type="eggNOG" id="COG0086">
    <property type="taxonomic scope" value="Bacteria"/>
</dbReference>
<dbReference type="HOGENOM" id="CLU_000524_3_1_5"/>
<dbReference type="Proteomes" id="UP000001021">
    <property type="component" value="Chromosome"/>
</dbReference>
<dbReference type="GO" id="GO:0000428">
    <property type="term" value="C:DNA-directed RNA polymerase complex"/>
    <property type="evidence" value="ECO:0007669"/>
    <property type="project" value="UniProtKB-KW"/>
</dbReference>
<dbReference type="GO" id="GO:0003677">
    <property type="term" value="F:DNA binding"/>
    <property type="evidence" value="ECO:0007669"/>
    <property type="project" value="UniProtKB-UniRule"/>
</dbReference>
<dbReference type="GO" id="GO:0003899">
    <property type="term" value="F:DNA-directed RNA polymerase activity"/>
    <property type="evidence" value="ECO:0007669"/>
    <property type="project" value="UniProtKB-UniRule"/>
</dbReference>
<dbReference type="GO" id="GO:0000287">
    <property type="term" value="F:magnesium ion binding"/>
    <property type="evidence" value="ECO:0007669"/>
    <property type="project" value="UniProtKB-UniRule"/>
</dbReference>
<dbReference type="GO" id="GO:0008270">
    <property type="term" value="F:zinc ion binding"/>
    <property type="evidence" value="ECO:0007669"/>
    <property type="project" value="UniProtKB-UniRule"/>
</dbReference>
<dbReference type="GO" id="GO:0006351">
    <property type="term" value="P:DNA-templated transcription"/>
    <property type="evidence" value="ECO:0007669"/>
    <property type="project" value="UniProtKB-UniRule"/>
</dbReference>
<dbReference type="CDD" id="cd02655">
    <property type="entry name" value="RNAP_beta'_C"/>
    <property type="match status" value="1"/>
</dbReference>
<dbReference type="CDD" id="cd01609">
    <property type="entry name" value="RNAP_beta'_N"/>
    <property type="match status" value="1"/>
</dbReference>
<dbReference type="Gene3D" id="1.10.132.30">
    <property type="match status" value="1"/>
</dbReference>
<dbReference type="Gene3D" id="1.10.150.390">
    <property type="match status" value="1"/>
</dbReference>
<dbReference type="Gene3D" id="1.10.1790.20">
    <property type="match status" value="1"/>
</dbReference>
<dbReference type="Gene3D" id="1.10.40.90">
    <property type="match status" value="1"/>
</dbReference>
<dbReference type="Gene3D" id="2.40.40.20">
    <property type="match status" value="1"/>
</dbReference>
<dbReference type="Gene3D" id="2.40.50.100">
    <property type="match status" value="3"/>
</dbReference>
<dbReference type="Gene3D" id="4.10.860.120">
    <property type="entry name" value="RNA polymerase II, clamp domain"/>
    <property type="match status" value="1"/>
</dbReference>
<dbReference type="Gene3D" id="1.10.274.100">
    <property type="entry name" value="RNA polymerase Rpb1, domain 3"/>
    <property type="match status" value="1"/>
</dbReference>
<dbReference type="HAMAP" id="MF_01322">
    <property type="entry name" value="RNApol_bact_RpoC"/>
    <property type="match status" value="1"/>
</dbReference>
<dbReference type="InterPro" id="IPR045867">
    <property type="entry name" value="DNA-dir_RpoC_beta_prime"/>
</dbReference>
<dbReference type="InterPro" id="IPR012754">
    <property type="entry name" value="DNA-dir_RpoC_beta_prime_bact"/>
</dbReference>
<dbReference type="InterPro" id="IPR000722">
    <property type="entry name" value="RNA_pol_asu"/>
</dbReference>
<dbReference type="InterPro" id="IPR006592">
    <property type="entry name" value="RNA_pol_N"/>
</dbReference>
<dbReference type="InterPro" id="IPR007080">
    <property type="entry name" value="RNA_pol_Rpb1_1"/>
</dbReference>
<dbReference type="InterPro" id="IPR007066">
    <property type="entry name" value="RNA_pol_Rpb1_3"/>
</dbReference>
<dbReference type="InterPro" id="IPR042102">
    <property type="entry name" value="RNA_pol_Rpb1_3_sf"/>
</dbReference>
<dbReference type="InterPro" id="IPR007083">
    <property type="entry name" value="RNA_pol_Rpb1_4"/>
</dbReference>
<dbReference type="InterPro" id="IPR007081">
    <property type="entry name" value="RNA_pol_Rpb1_5"/>
</dbReference>
<dbReference type="InterPro" id="IPR044893">
    <property type="entry name" value="RNA_pol_Rpb1_clamp_domain"/>
</dbReference>
<dbReference type="InterPro" id="IPR038120">
    <property type="entry name" value="Rpb1_funnel_sf"/>
</dbReference>
<dbReference type="NCBIfam" id="TIGR02386">
    <property type="entry name" value="rpoC_TIGR"/>
    <property type="match status" value="1"/>
</dbReference>
<dbReference type="PANTHER" id="PTHR19376">
    <property type="entry name" value="DNA-DIRECTED RNA POLYMERASE"/>
    <property type="match status" value="1"/>
</dbReference>
<dbReference type="PANTHER" id="PTHR19376:SF54">
    <property type="entry name" value="DNA-DIRECTED RNA POLYMERASE SUBUNIT BETA"/>
    <property type="match status" value="1"/>
</dbReference>
<dbReference type="Pfam" id="PF04997">
    <property type="entry name" value="RNA_pol_Rpb1_1"/>
    <property type="match status" value="1"/>
</dbReference>
<dbReference type="Pfam" id="PF00623">
    <property type="entry name" value="RNA_pol_Rpb1_2"/>
    <property type="match status" value="2"/>
</dbReference>
<dbReference type="Pfam" id="PF04983">
    <property type="entry name" value="RNA_pol_Rpb1_3"/>
    <property type="match status" value="1"/>
</dbReference>
<dbReference type="Pfam" id="PF05000">
    <property type="entry name" value="RNA_pol_Rpb1_4"/>
    <property type="match status" value="1"/>
</dbReference>
<dbReference type="Pfam" id="PF04998">
    <property type="entry name" value="RNA_pol_Rpb1_5"/>
    <property type="match status" value="1"/>
</dbReference>
<dbReference type="SMART" id="SM00663">
    <property type="entry name" value="RPOLA_N"/>
    <property type="match status" value="1"/>
</dbReference>
<dbReference type="SUPFAM" id="SSF64484">
    <property type="entry name" value="beta and beta-prime subunits of DNA dependent RNA-polymerase"/>
    <property type="match status" value="1"/>
</dbReference>
<evidence type="ECO:0000255" key="1">
    <source>
        <dbReference type="HAMAP-Rule" id="MF_01322"/>
    </source>
</evidence>
<comment type="function">
    <text evidence="1">DNA-dependent RNA polymerase catalyzes the transcription of DNA into RNA using the four ribonucleoside triphosphates as substrates.</text>
</comment>
<comment type="catalytic activity">
    <reaction evidence="1">
        <text>RNA(n) + a ribonucleoside 5'-triphosphate = RNA(n+1) + diphosphate</text>
        <dbReference type="Rhea" id="RHEA:21248"/>
        <dbReference type="Rhea" id="RHEA-COMP:14527"/>
        <dbReference type="Rhea" id="RHEA-COMP:17342"/>
        <dbReference type="ChEBI" id="CHEBI:33019"/>
        <dbReference type="ChEBI" id="CHEBI:61557"/>
        <dbReference type="ChEBI" id="CHEBI:140395"/>
        <dbReference type="EC" id="2.7.7.6"/>
    </reaction>
</comment>
<comment type="cofactor">
    <cofactor evidence="1">
        <name>Mg(2+)</name>
        <dbReference type="ChEBI" id="CHEBI:18420"/>
    </cofactor>
    <text evidence="1">Binds 1 Mg(2+) ion per subunit.</text>
</comment>
<comment type="cofactor">
    <cofactor evidence="1">
        <name>Zn(2+)</name>
        <dbReference type="ChEBI" id="CHEBI:29105"/>
    </cofactor>
    <text evidence="1">Binds 2 Zn(2+) ions per subunit.</text>
</comment>
<comment type="subunit">
    <text evidence="1">The RNAP catalytic core consists of 2 alpha, 1 beta, 1 beta' and 1 omega subunit. When a sigma factor is associated with the core the holoenzyme is formed, which can initiate transcription.</text>
</comment>
<comment type="similarity">
    <text evidence="1">Belongs to the RNA polymerase beta' chain family.</text>
</comment>
<accession>Q5HC04</accession>
<accession>Q5FCV4</accession>
<feature type="chain" id="PRO_0000225535" description="DNA-directed RNA polymerase subunit beta'">
    <location>
        <begin position="1"/>
        <end position="1411"/>
    </location>
</feature>
<feature type="binding site" evidence="1">
    <location>
        <position position="69"/>
    </location>
    <ligand>
        <name>Zn(2+)</name>
        <dbReference type="ChEBI" id="CHEBI:29105"/>
        <label>1</label>
    </ligand>
</feature>
<feature type="binding site" evidence="1">
    <location>
        <position position="71"/>
    </location>
    <ligand>
        <name>Zn(2+)</name>
        <dbReference type="ChEBI" id="CHEBI:29105"/>
        <label>1</label>
    </ligand>
</feature>
<feature type="binding site" evidence="1">
    <location>
        <position position="84"/>
    </location>
    <ligand>
        <name>Zn(2+)</name>
        <dbReference type="ChEBI" id="CHEBI:29105"/>
        <label>1</label>
    </ligand>
</feature>
<feature type="binding site" evidence="1">
    <location>
        <position position="87"/>
    </location>
    <ligand>
        <name>Zn(2+)</name>
        <dbReference type="ChEBI" id="CHEBI:29105"/>
        <label>1</label>
    </ligand>
</feature>
<feature type="binding site" evidence="1">
    <location>
        <position position="461"/>
    </location>
    <ligand>
        <name>Mg(2+)</name>
        <dbReference type="ChEBI" id="CHEBI:18420"/>
    </ligand>
</feature>
<feature type="binding site" evidence="1">
    <location>
        <position position="463"/>
    </location>
    <ligand>
        <name>Mg(2+)</name>
        <dbReference type="ChEBI" id="CHEBI:18420"/>
    </ligand>
</feature>
<feature type="binding site" evidence="1">
    <location>
        <position position="465"/>
    </location>
    <ligand>
        <name>Mg(2+)</name>
        <dbReference type="ChEBI" id="CHEBI:18420"/>
    </ligand>
</feature>
<feature type="binding site" evidence="1">
    <location>
        <position position="809"/>
    </location>
    <ligand>
        <name>Zn(2+)</name>
        <dbReference type="ChEBI" id="CHEBI:29105"/>
        <label>2</label>
    </ligand>
</feature>
<feature type="binding site" evidence="1">
    <location>
        <position position="883"/>
    </location>
    <ligand>
        <name>Zn(2+)</name>
        <dbReference type="ChEBI" id="CHEBI:29105"/>
        <label>2</label>
    </ligand>
</feature>
<feature type="binding site" evidence="1">
    <location>
        <position position="890"/>
    </location>
    <ligand>
        <name>Zn(2+)</name>
        <dbReference type="ChEBI" id="CHEBI:29105"/>
        <label>2</label>
    </ligand>
</feature>
<feature type="binding site" evidence="1">
    <location>
        <position position="893"/>
    </location>
    <ligand>
        <name>Zn(2+)</name>
        <dbReference type="ChEBI" id="CHEBI:29105"/>
        <label>2</label>
    </ligand>
</feature>
<gene>
    <name evidence="1" type="primary">rpoC</name>
    <name type="ordered locus">Erum1730</name>
    <name type="ordered locus">ERWE_CDS_01720</name>
</gene>
<keyword id="KW-0240">DNA-directed RNA polymerase</keyword>
<keyword id="KW-0460">Magnesium</keyword>
<keyword id="KW-0479">Metal-binding</keyword>
<keyword id="KW-0548">Nucleotidyltransferase</keyword>
<keyword id="KW-0804">Transcription</keyword>
<keyword id="KW-0808">Transferase</keyword>
<keyword id="KW-0862">Zinc</keyword>
<reference key="1">
    <citation type="journal article" date="2005" name="Proc. Natl. Acad. Sci. U.S.A.">
        <title>The genome of the heartwater agent Ehrlichia ruminantium contains multiple tandem repeats of actively variable copy number.</title>
        <authorList>
            <person name="Collins N.E."/>
            <person name="Liebenberg J."/>
            <person name="de Villiers E.P."/>
            <person name="Brayton K.A."/>
            <person name="Louw E."/>
            <person name="Pretorius A."/>
            <person name="Faber F.E."/>
            <person name="van Heerden H."/>
            <person name="Josemans A."/>
            <person name="van Kleef M."/>
            <person name="Steyn H.C."/>
            <person name="van Strijp M.F."/>
            <person name="Zweygarth E."/>
            <person name="Jongejan F."/>
            <person name="Maillard J.C."/>
            <person name="Berthier D."/>
            <person name="Botha M."/>
            <person name="Joubert F."/>
            <person name="Corton C.H."/>
            <person name="Thomson N.R."/>
            <person name="Allsopp M.T."/>
            <person name="Allsopp B.A."/>
        </authorList>
    </citation>
    <scope>NUCLEOTIDE SEQUENCE [LARGE SCALE GENOMIC DNA]</scope>
    <source>
        <strain>Welgevonden</strain>
    </source>
</reference>
<reference key="2">
    <citation type="journal article" date="2006" name="J. Bacteriol.">
        <title>Comparative genomic analysis of three strains of Ehrlichia ruminantium reveals an active process of genome size plasticity.</title>
        <authorList>
            <person name="Frutos R."/>
            <person name="Viari A."/>
            <person name="Ferraz C."/>
            <person name="Morgat A."/>
            <person name="Eychenie S."/>
            <person name="Kandassamy Y."/>
            <person name="Chantal I."/>
            <person name="Bensaid A."/>
            <person name="Coissac E."/>
            <person name="Vachiery N."/>
            <person name="Demaille J."/>
            <person name="Martinez D."/>
        </authorList>
    </citation>
    <scope>NUCLEOTIDE SEQUENCE [LARGE SCALE GENOMIC DNA]</scope>
    <source>
        <strain>Welgevonden</strain>
    </source>
</reference>
<organism>
    <name type="scientific">Ehrlichia ruminantium (strain Welgevonden)</name>
    <dbReference type="NCBI Taxonomy" id="254945"/>
    <lineage>
        <taxon>Bacteria</taxon>
        <taxon>Pseudomonadati</taxon>
        <taxon>Pseudomonadota</taxon>
        <taxon>Alphaproteobacteria</taxon>
        <taxon>Rickettsiales</taxon>
        <taxon>Anaplasmataceae</taxon>
        <taxon>Ehrlichia</taxon>
    </lineage>
</organism>
<proteinExistence type="inferred from homology"/>
<name>RPOC_EHRRW</name>